<feature type="signal peptide" evidence="1">
    <location>
        <begin position="1"/>
        <end position="16"/>
    </location>
</feature>
<feature type="chain" id="PRO_1000140648" description="UPF0194 membrane protein YbhG">
    <location>
        <begin position="17"/>
        <end position="332"/>
    </location>
</feature>
<feature type="coiled-coil region" evidence="1">
    <location>
        <begin position="108"/>
        <end position="209"/>
    </location>
</feature>
<proteinExistence type="inferred from homology"/>
<comment type="subcellular location">
    <subcellularLocation>
        <location evidence="1">Periplasm</location>
    </subcellularLocation>
</comment>
<comment type="similarity">
    <text evidence="1">Belongs to the UPF0194 family.</text>
</comment>
<gene>
    <name evidence="1" type="primary">ybhG</name>
    <name type="ordered locus">ECS88_0813</name>
</gene>
<keyword id="KW-0175">Coiled coil</keyword>
<keyword id="KW-0574">Periplasm</keyword>
<keyword id="KW-1185">Reference proteome</keyword>
<keyword id="KW-0732">Signal</keyword>
<name>YBHG_ECO45</name>
<organism>
    <name type="scientific">Escherichia coli O45:K1 (strain S88 / ExPEC)</name>
    <dbReference type="NCBI Taxonomy" id="585035"/>
    <lineage>
        <taxon>Bacteria</taxon>
        <taxon>Pseudomonadati</taxon>
        <taxon>Pseudomonadota</taxon>
        <taxon>Gammaproteobacteria</taxon>
        <taxon>Enterobacterales</taxon>
        <taxon>Enterobacteriaceae</taxon>
        <taxon>Escherichia</taxon>
    </lineage>
</organism>
<sequence>MMKKPVVIGLAVVVLAAVVAGGYWWYQSRQDNGLTLYGNVDIRTVNLSFRVGGRVESLAVDEGDAIKAGQVLGELDHKPYEIALMQAKAGVSVAQAQYDLMLAGYRDEEIAQAAAAVKQAQAAYDYAQNFYNRQQGLWKSRTISANDLENARSSRDQAQATLKSAQDKLRQYRSGNREQDIAQAKASLEQAQAQLAQAELNLQDSTLIAPSDGTLLTRAVEPGTVLNEGGTVFTVSLTRPVWVRAYVDERNLDQAQPGRKVLLYTDGRPNKPYHGQIGFVSPTAEFTPKTVETPDLRTDLVYRLRIVVTDADDALRQGMPVTVQFGDEAGHE</sequence>
<evidence type="ECO:0000255" key="1">
    <source>
        <dbReference type="HAMAP-Rule" id="MF_01304"/>
    </source>
</evidence>
<accession>B7MGQ3</accession>
<protein>
    <recommendedName>
        <fullName evidence="1">UPF0194 membrane protein YbhG</fullName>
    </recommendedName>
</protein>
<reference key="1">
    <citation type="journal article" date="2009" name="PLoS Genet.">
        <title>Organised genome dynamics in the Escherichia coli species results in highly diverse adaptive paths.</title>
        <authorList>
            <person name="Touchon M."/>
            <person name="Hoede C."/>
            <person name="Tenaillon O."/>
            <person name="Barbe V."/>
            <person name="Baeriswyl S."/>
            <person name="Bidet P."/>
            <person name="Bingen E."/>
            <person name="Bonacorsi S."/>
            <person name="Bouchier C."/>
            <person name="Bouvet O."/>
            <person name="Calteau A."/>
            <person name="Chiapello H."/>
            <person name="Clermont O."/>
            <person name="Cruveiller S."/>
            <person name="Danchin A."/>
            <person name="Diard M."/>
            <person name="Dossat C."/>
            <person name="Karoui M.E."/>
            <person name="Frapy E."/>
            <person name="Garry L."/>
            <person name="Ghigo J.M."/>
            <person name="Gilles A.M."/>
            <person name="Johnson J."/>
            <person name="Le Bouguenec C."/>
            <person name="Lescat M."/>
            <person name="Mangenot S."/>
            <person name="Martinez-Jehanne V."/>
            <person name="Matic I."/>
            <person name="Nassif X."/>
            <person name="Oztas S."/>
            <person name="Petit M.A."/>
            <person name="Pichon C."/>
            <person name="Rouy Z."/>
            <person name="Ruf C.S."/>
            <person name="Schneider D."/>
            <person name="Tourret J."/>
            <person name="Vacherie B."/>
            <person name="Vallenet D."/>
            <person name="Medigue C."/>
            <person name="Rocha E.P.C."/>
            <person name="Denamur E."/>
        </authorList>
    </citation>
    <scope>NUCLEOTIDE SEQUENCE [LARGE SCALE GENOMIC DNA]</scope>
    <source>
        <strain>S88 / ExPEC</strain>
    </source>
</reference>
<dbReference type="EMBL" id="CU928161">
    <property type="protein sequence ID" value="CAR02151.1"/>
    <property type="molecule type" value="Genomic_DNA"/>
</dbReference>
<dbReference type="SMR" id="B7MGQ3"/>
<dbReference type="KEGG" id="ecz:ECS88_0813"/>
<dbReference type="HOGENOM" id="CLU_018816_6_3_6"/>
<dbReference type="Proteomes" id="UP000000747">
    <property type="component" value="Chromosome"/>
</dbReference>
<dbReference type="GO" id="GO:0042597">
    <property type="term" value="C:periplasmic space"/>
    <property type="evidence" value="ECO:0007669"/>
    <property type="project" value="UniProtKB-SubCell"/>
</dbReference>
<dbReference type="FunFam" id="1.10.287.470:FF:000004">
    <property type="entry name" value="UPF0194 membrane protein YbhG"/>
    <property type="match status" value="1"/>
</dbReference>
<dbReference type="FunFam" id="2.40.50.100:FF:000025">
    <property type="entry name" value="UPF0194 membrane protein YbhG"/>
    <property type="match status" value="1"/>
</dbReference>
<dbReference type="Gene3D" id="2.40.30.170">
    <property type="match status" value="1"/>
</dbReference>
<dbReference type="Gene3D" id="2.40.50.100">
    <property type="match status" value="2"/>
</dbReference>
<dbReference type="Gene3D" id="1.10.287.470">
    <property type="entry name" value="Helix hairpin bin"/>
    <property type="match status" value="1"/>
</dbReference>
<dbReference type="HAMAP" id="MF_01304">
    <property type="entry name" value="UPF0194"/>
    <property type="match status" value="1"/>
</dbReference>
<dbReference type="InterPro" id="IPR032317">
    <property type="entry name" value="CusB_D23"/>
</dbReference>
<dbReference type="InterPro" id="IPR022936">
    <property type="entry name" value="UPF0194_membrane_YbhG"/>
</dbReference>
<dbReference type="InterPro" id="IPR050465">
    <property type="entry name" value="UPF0194_transport"/>
</dbReference>
<dbReference type="NCBIfam" id="NF002939">
    <property type="entry name" value="PRK03598.1"/>
    <property type="match status" value="1"/>
</dbReference>
<dbReference type="PANTHER" id="PTHR32347">
    <property type="entry name" value="EFFLUX SYSTEM COMPONENT YKNX-RELATED"/>
    <property type="match status" value="1"/>
</dbReference>
<dbReference type="PANTHER" id="PTHR32347:SF29">
    <property type="entry name" value="UPF0194 MEMBRANE PROTEIN YBHG"/>
    <property type="match status" value="1"/>
</dbReference>
<dbReference type="Pfam" id="PF16576">
    <property type="entry name" value="HlyD_D23"/>
    <property type="match status" value="1"/>
</dbReference>
<dbReference type="SUPFAM" id="SSF111369">
    <property type="entry name" value="HlyD-like secretion proteins"/>
    <property type="match status" value="2"/>
</dbReference>
<dbReference type="SUPFAM" id="SSF56954">
    <property type="entry name" value="Outer membrane efflux proteins (OEP)"/>
    <property type="match status" value="1"/>
</dbReference>